<evidence type="ECO:0000255" key="1">
    <source>
        <dbReference type="HAMAP-Rule" id="MF_00313"/>
    </source>
</evidence>
<protein>
    <recommendedName>
        <fullName evidence="1">Glutaminase 1</fullName>
        <ecNumber evidence="1">3.5.1.2</ecNumber>
    </recommendedName>
</protein>
<organism>
    <name type="scientific">Bacillus anthracis</name>
    <dbReference type="NCBI Taxonomy" id="1392"/>
    <lineage>
        <taxon>Bacteria</taxon>
        <taxon>Bacillati</taxon>
        <taxon>Bacillota</taxon>
        <taxon>Bacilli</taxon>
        <taxon>Bacillales</taxon>
        <taxon>Bacillaceae</taxon>
        <taxon>Bacillus</taxon>
        <taxon>Bacillus cereus group</taxon>
    </lineage>
</organism>
<name>GLSA1_BACAN</name>
<gene>
    <name evidence="1" type="primary">glsA1</name>
    <name type="synonym">glsA-1</name>
    <name type="ordered locus">BA_0499</name>
    <name type="ordered locus">GBAA_0499</name>
    <name type="ordered locus">BAS0471</name>
</gene>
<feature type="chain" id="PRO_0000110588" description="Glutaminase 1">
    <location>
        <begin position="1"/>
        <end position="309"/>
    </location>
</feature>
<feature type="binding site" evidence="1">
    <location>
        <position position="65"/>
    </location>
    <ligand>
        <name>substrate</name>
    </ligand>
</feature>
<feature type="binding site" evidence="1">
    <location>
        <position position="117"/>
    </location>
    <ligand>
        <name>substrate</name>
    </ligand>
</feature>
<feature type="binding site" evidence="1">
    <location>
        <position position="162"/>
    </location>
    <ligand>
        <name>substrate</name>
    </ligand>
</feature>
<feature type="binding site" evidence="1">
    <location>
        <position position="169"/>
    </location>
    <ligand>
        <name>substrate</name>
    </ligand>
</feature>
<feature type="binding site" evidence="1">
    <location>
        <position position="193"/>
    </location>
    <ligand>
        <name>substrate</name>
    </ligand>
</feature>
<feature type="binding site" evidence="1">
    <location>
        <position position="245"/>
    </location>
    <ligand>
        <name>substrate</name>
    </ligand>
</feature>
<feature type="binding site" evidence="1">
    <location>
        <position position="263"/>
    </location>
    <ligand>
        <name>substrate</name>
    </ligand>
</feature>
<accession>Q81YY0</accession>
<accession>Q6I3S9</accession>
<accession>Q6KXJ2</accession>
<proteinExistence type="inferred from homology"/>
<dbReference type="EC" id="3.5.1.2" evidence="1"/>
<dbReference type="EMBL" id="AE016879">
    <property type="protein sequence ID" value="AAP24522.1"/>
    <property type="molecule type" value="Genomic_DNA"/>
</dbReference>
<dbReference type="EMBL" id="AE017334">
    <property type="protein sequence ID" value="AAT29592.1"/>
    <property type="molecule type" value="Genomic_DNA"/>
</dbReference>
<dbReference type="EMBL" id="AE017225">
    <property type="protein sequence ID" value="AAT52802.1"/>
    <property type="molecule type" value="Genomic_DNA"/>
</dbReference>
<dbReference type="RefSeq" id="NP_843036.1">
    <property type="nucleotide sequence ID" value="NC_003997.3"/>
</dbReference>
<dbReference type="RefSeq" id="YP_026751.1">
    <property type="nucleotide sequence ID" value="NC_005945.1"/>
</dbReference>
<dbReference type="SMR" id="Q81YY0"/>
<dbReference type="STRING" id="261594.GBAA_0499"/>
<dbReference type="DNASU" id="1086143"/>
<dbReference type="KEGG" id="ban:BA_0499"/>
<dbReference type="KEGG" id="bar:GBAA_0499"/>
<dbReference type="KEGG" id="bat:BAS0471"/>
<dbReference type="PATRIC" id="fig|198094.11.peg.497"/>
<dbReference type="eggNOG" id="COG2066">
    <property type="taxonomic scope" value="Bacteria"/>
</dbReference>
<dbReference type="HOGENOM" id="CLU_027932_1_0_9"/>
<dbReference type="OMA" id="RPRNPFI"/>
<dbReference type="OrthoDB" id="9788822at2"/>
<dbReference type="Proteomes" id="UP000000427">
    <property type="component" value="Chromosome"/>
</dbReference>
<dbReference type="Proteomes" id="UP000000594">
    <property type="component" value="Chromosome"/>
</dbReference>
<dbReference type="GO" id="GO:0004359">
    <property type="term" value="F:glutaminase activity"/>
    <property type="evidence" value="ECO:0007669"/>
    <property type="project" value="UniProtKB-UniRule"/>
</dbReference>
<dbReference type="GO" id="GO:0006537">
    <property type="term" value="P:glutamate biosynthetic process"/>
    <property type="evidence" value="ECO:0007669"/>
    <property type="project" value="TreeGrafter"/>
</dbReference>
<dbReference type="GO" id="GO:0006543">
    <property type="term" value="P:glutamine catabolic process"/>
    <property type="evidence" value="ECO:0007669"/>
    <property type="project" value="TreeGrafter"/>
</dbReference>
<dbReference type="FunFam" id="1.10.1500.10:FF:000001">
    <property type="entry name" value="Glutaminase"/>
    <property type="match status" value="1"/>
</dbReference>
<dbReference type="FunFam" id="3.40.710.10:FF:000005">
    <property type="entry name" value="Glutaminase"/>
    <property type="match status" value="1"/>
</dbReference>
<dbReference type="Gene3D" id="1.10.1500.10">
    <property type="match status" value="1"/>
</dbReference>
<dbReference type="Gene3D" id="3.40.710.10">
    <property type="entry name" value="DD-peptidase/beta-lactamase superfamily"/>
    <property type="match status" value="1"/>
</dbReference>
<dbReference type="HAMAP" id="MF_00313">
    <property type="entry name" value="Glutaminase"/>
    <property type="match status" value="1"/>
</dbReference>
<dbReference type="InterPro" id="IPR012338">
    <property type="entry name" value="Beta-lactam/transpept-like"/>
</dbReference>
<dbReference type="InterPro" id="IPR015868">
    <property type="entry name" value="Glutaminase"/>
</dbReference>
<dbReference type="NCBIfam" id="TIGR03814">
    <property type="entry name" value="Gln_ase"/>
    <property type="match status" value="1"/>
</dbReference>
<dbReference type="PANTHER" id="PTHR12544">
    <property type="entry name" value="GLUTAMINASE"/>
    <property type="match status" value="1"/>
</dbReference>
<dbReference type="PANTHER" id="PTHR12544:SF29">
    <property type="entry name" value="GLUTAMINASE"/>
    <property type="match status" value="1"/>
</dbReference>
<dbReference type="Pfam" id="PF04960">
    <property type="entry name" value="Glutaminase"/>
    <property type="match status" value="1"/>
</dbReference>
<dbReference type="SUPFAM" id="SSF56601">
    <property type="entry name" value="beta-lactamase/transpeptidase-like"/>
    <property type="match status" value="1"/>
</dbReference>
<keyword id="KW-0378">Hydrolase</keyword>
<keyword id="KW-1185">Reference proteome</keyword>
<sequence length="309" mass="34048">MQCIETNNLQQLLEQVKPYTKKGKLATYIPELGNANPDDLGIAIFHKETEYIHAGNSQTLFTLQSISKVITLALALLDRGEEYVFSKVGMEPTGDPFNSIIKLETTSPSKPLNPMINAGALAITSMLAGKDNEEKMERILHFVREITDNPTINYSSKVANSELETAYLNRSLCYYMKQNGIIDCDIEELMDLYTRQCAVEVNCIDLARIGLIFAMDGYDPYKKKQIIPKHITKICKTFMVTCGMYNESGEFAIRVGIPAKSGVAGGIFGCVKGEMGIGIFGPALDANGNSIAGFKILELLSAQEGWSIF</sequence>
<comment type="catalytic activity">
    <reaction evidence="1">
        <text>L-glutamine + H2O = L-glutamate + NH4(+)</text>
        <dbReference type="Rhea" id="RHEA:15889"/>
        <dbReference type="ChEBI" id="CHEBI:15377"/>
        <dbReference type="ChEBI" id="CHEBI:28938"/>
        <dbReference type="ChEBI" id="CHEBI:29985"/>
        <dbReference type="ChEBI" id="CHEBI:58359"/>
        <dbReference type="EC" id="3.5.1.2"/>
    </reaction>
</comment>
<comment type="subunit">
    <text evidence="1">Homotetramer.</text>
</comment>
<comment type="similarity">
    <text evidence="1">Belongs to the glutaminase family.</text>
</comment>
<reference key="1">
    <citation type="journal article" date="2003" name="Nature">
        <title>The genome sequence of Bacillus anthracis Ames and comparison to closely related bacteria.</title>
        <authorList>
            <person name="Read T.D."/>
            <person name="Peterson S.N."/>
            <person name="Tourasse N.J."/>
            <person name="Baillie L.W."/>
            <person name="Paulsen I.T."/>
            <person name="Nelson K.E."/>
            <person name="Tettelin H."/>
            <person name="Fouts D.E."/>
            <person name="Eisen J.A."/>
            <person name="Gill S.R."/>
            <person name="Holtzapple E.K."/>
            <person name="Okstad O.A."/>
            <person name="Helgason E."/>
            <person name="Rilstone J."/>
            <person name="Wu M."/>
            <person name="Kolonay J.F."/>
            <person name="Beanan M.J."/>
            <person name="Dodson R.J."/>
            <person name="Brinkac L.M."/>
            <person name="Gwinn M.L."/>
            <person name="DeBoy R.T."/>
            <person name="Madpu R."/>
            <person name="Daugherty S.C."/>
            <person name="Durkin A.S."/>
            <person name="Haft D.H."/>
            <person name="Nelson W.C."/>
            <person name="Peterson J.D."/>
            <person name="Pop M."/>
            <person name="Khouri H.M."/>
            <person name="Radune D."/>
            <person name="Benton J.L."/>
            <person name="Mahamoud Y."/>
            <person name="Jiang L."/>
            <person name="Hance I.R."/>
            <person name="Weidman J.F."/>
            <person name="Berry K.J."/>
            <person name="Plaut R.D."/>
            <person name="Wolf A.M."/>
            <person name="Watkins K.L."/>
            <person name="Nierman W.C."/>
            <person name="Hazen A."/>
            <person name="Cline R.T."/>
            <person name="Redmond C."/>
            <person name="Thwaite J.E."/>
            <person name="White O."/>
            <person name="Salzberg S.L."/>
            <person name="Thomason B."/>
            <person name="Friedlander A.M."/>
            <person name="Koehler T.M."/>
            <person name="Hanna P.C."/>
            <person name="Kolstoe A.-B."/>
            <person name="Fraser C.M."/>
        </authorList>
    </citation>
    <scope>NUCLEOTIDE SEQUENCE [LARGE SCALE GENOMIC DNA]</scope>
    <source>
        <strain>Ames / isolate Porton</strain>
    </source>
</reference>
<reference key="2">
    <citation type="journal article" date="2009" name="J. Bacteriol.">
        <title>The complete genome sequence of Bacillus anthracis Ames 'Ancestor'.</title>
        <authorList>
            <person name="Ravel J."/>
            <person name="Jiang L."/>
            <person name="Stanley S.T."/>
            <person name="Wilson M.R."/>
            <person name="Decker R.S."/>
            <person name="Read T.D."/>
            <person name="Worsham P."/>
            <person name="Keim P.S."/>
            <person name="Salzberg S.L."/>
            <person name="Fraser-Liggett C.M."/>
            <person name="Rasko D.A."/>
        </authorList>
    </citation>
    <scope>NUCLEOTIDE SEQUENCE [LARGE SCALE GENOMIC DNA]</scope>
    <source>
        <strain>Ames ancestor</strain>
    </source>
</reference>
<reference key="3">
    <citation type="submission" date="2004-01" db="EMBL/GenBank/DDBJ databases">
        <title>Complete genome sequence of Bacillus anthracis Sterne.</title>
        <authorList>
            <person name="Brettin T.S."/>
            <person name="Bruce D."/>
            <person name="Challacombe J.F."/>
            <person name="Gilna P."/>
            <person name="Han C."/>
            <person name="Hill K."/>
            <person name="Hitchcock P."/>
            <person name="Jackson P."/>
            <person name="Keim P."/>
            <person name="Longmire J."/>
            <person name="Lucas S."/>
            <person name="Okinaka R."/>
            <person name="Richardson P."/>
            <person name="Rubin E."/>
            <person name="Tice H."/>
        </authorList>
    </citation>
    <scope>NUCLEOTIDE SEQUENCE [LARGE SCALE GENOMIC DNA]</scope>
    <source>
        <strain>Sterne</strain>
    </source>
</reference>